<accession>Q6LUJ2</accession>
<feature type="chain" id="PRO_0000228225" description="Translation initiation factor IF-2">
    <location>
        <begin position="1"/>
        <end position="899"/>
    </location>
</feature>
<feature type="domain" description="tr-type G">
    <location>
        <begin position="398"/>
        <end position="565"/>
    </location>
</feature>
<feature type="region of interest" description="Disordered" evidence="3">
    <location>
        <begin position="31"/>
        <end position="227"/>
    </location>
</feature>
<feature type="region of interest" description="Disordered" evidence="3">
    <location>
        <begin position="240"/>
        <end position="310"/>
    </location>
</feature>
<feature type="region of interest" description="G1" evidence="1">
    <location>
        <begin position="407"/>
        <end position="414"/>
    </location>
</feature>
<feature type="region of interest" description="G2" evidence="1">
    <location>
        <begin position="432"/>
        <end position="436"/>
    </location>
</feature>
<feature type="region of interest" description="G3" evidence="1">
    <location>
        <begin position="453"/>
        <end position="456"/>
    </location>
</feature>
<feature type="region of interest" description="G4" evidence="1">
    <location>
        <begin position="507"/>
        <end position="510"/>
    </location>
</feature>
<feature type="region of interest" description="G5" evidence="1">
    <location>
        <begin position="543"/>
        <end position="545"/>
    </location>
</feature>
<feature type="compositionally biased region" description="Polar residues" evidence="3">
    <location>
        <begin position="36"/>
        <end position="47"/>
    </location>
</feature>
<feature type="compositionally biased region" description="Polar residues" evidence="3">
    <location>
        <begin position="73"/>
        <end position="87"/>
    </location>
</feature>
<feature type="compositionally biased region" description="Basic and acidic residues" evidence="3">
    <location>
        <begin position="101"/>
        <end position="173"/>
    </location>
</feature>
<feature type="compositionally biased region" description="Basic and acidic residues" evidence="3">
    <location>
        <begin position="181"/>
        <end position="219"/>
    </location>
</feature>
<feature type="compositionally biased region" description="Basic and acidic residues" evidence="3">
    <location>
        <begin position="247"/>
        <end position="261"/>
    </location>
</feature>
<feature type="compositionally biased region" description="Polar residues" evidence="3">
    <location>
        <begin position="296"/>
        <end position="308"/>
    </location>
</feature>
<feature type="binding site" evidence="2">
    <location>
        <begin position="407"/>
        <end position="414"/>
    </location>
    <ligand>
        <name>GTP</name>
        <dbReference type="ChEBI" id="CHEBI:37565"/>
    </ligand>
</feature>
<feature type="binding site" evidence="2">
    <location>
        <begin position="453"/>
        <end position="457"/>
    </location>
    <ligand>
        <name>GTP</name>
        <dbReference type="ChEBI" id="CHEBI:37565"/>
    </ligand>
</feature>
<feature type="binding site" evidence="2">
    <location>
        <begin position="507"/>
        <end position="510"/>
    </location>
    <ligand>
        <name>GTP</name>
        <dbReference type="ChEBI" id="CHEBI:37565"/>
    </ligand>
</feature>
<protein>
    <recommendedName>
        <fullName evidence="2">Translation initiation factor IF-2</fullName>
    </recommendedName>
</protein>
<sequence length="899" mass="98470">MSEVTVKALAEEVGTPIDRLLQQFSDAGISKKAEDNVSQTEKQSLLSHLQKEHGGESTDGTPTRLTLQRKTHSTLSVAGTGGKSKSVQVEVRKKRTFVKRSALEEEQRAADNAKQEAEETAQREAENVAKRKEDVRLAEEKAKRDEENKAKRNTEDTVKREATDKRKAEEKAKRTVAVKQAKSETELLQLRREEEAKRKAEEDSQRQLEEARKMAETNEKNWSATEQNVTANMEKSDYHVTTSTHARAAEDEQDRKEETTGTRRKKKPAAKKADDRKGRGGRNQRNQRGGRGKQKPQVNAPTSMQQGFDKTATVAKSDVVIGETIVVSELANKMAVKATEVIKAMMKMGAMVTINQVIDQETAALVAEEMGHKVIFRKENELEEALMSDRGETQAVESRAPVVTIMGHVDHGKTSTLDFIRKAHVASGEAGGITQHIGAYHVEIGNGMITFLDTPGHAAFTAMRARGAQATDIVVLVVAADDGVMPQTVEAIQHAKAAGVPLIVAVNKIDKDGANPDNVKNELAQYDIIPEEWGGENIFVHISAKQGTNIDGLLEAILLQSEILELTAVKEGMASGVVIESRIDKGRGPVATVLVQSGTLRKGDIVLCGLEHGRVRAMRDENGKDIESAGPSIPVEILGLSGVPAAGDEATVVRDDRKAREVALYRQGKFRDVKLARQQKSKLENMFSHMEAGEVAECNVVLKADVQGSIEAIADSLMKLSTDEVKVKVVGSGVGGITETDAVLAAASNAIILGFNVRADVPARRMIENENLDLRYYSVIYQLIDEVKAAMGGMLAPEFRQEIIGLAEVRDVFKSPKIGAIAGCMVTEGTIKRNNPIRVLRDNVVIYEGELESLRRFKDDTNEVKNGYECGIGVKNYNDVRVGDQIEVFEIIEIQRTLD</sequence>
<name>IF2_PHOPR</name>
<proteinExistence type="inferred from homology"/>
<organism>
    <name type="scientific">Photobacterium profundum (strain SS9)</name>
    <dbReference type="NCBI Taxonomy" id="298386"/>
    <lineage>
        <taxon>Bacteria</taxon>
        <taxon>Pseudomonadati</taxon>
        <taxon>Pseudomonadota</taxon>
        <taxon>Gammaproteobacteria</taxon>
        <taxon>Vibrionales</taxon>
        <taxon>Vibrionaceae</taxon>
        <taxon>Photobacterium</taxon>
    </lineage>
</organism>
<evidence type="ECO:0000250" key="1"/>
<evidence type="ECO:0000255" key="2">
    <source>
        <dbReference type="HAMAP-Rule" id="MF_00100"/>
    </source>
</evidence>
<evidence type="ECO:0000256" key="3">
    <source>
        <dbReference type="SAM" id="MobiDB-lite"/>
    </source>
</evidence>
<dbReference type="EMBL" id="CR378664">
    <property type="protein sequence ID" value="CAG19033.1"/>
    <property type="molecule type" value="Genomic_DNA"/>
</dbReference>
<dbReference type="RefSeq" id="WP_011217382.1">
    <property type="nucleotide sequence ID" value="NC_006370.1"/>
</dbReference>
<dbReference type="SMR" id="Q6LUJ2"/>
<dbReference type="STRING" id="298386.PBPRA0612"/>
<dbReference type="KEGG" id="ppr:PBPRA0612"/>
<dbReference type="eggNOG" id="COG0532">
    <property type="taxonomic scope" value="Bacteria"/>
</dbReference>
<dbReference type="HOGENOM" id="CLU_006301_6_3_6"/>
<dbReference type="Proteomes" id="UP000000593">
    <property type="component" value="Chromosome 1"/>
</dbReference>
<dbReference type="GO" id="GO:0005829">
    <property type="term" value="C:cytosol"/>
    <property type="evidence" value="ECO:0007669"/>
    <property type="project" value="TreeGrafter"/>
</dbReference>
<dbReference type="GO" id="GO:0005525">
    <property type="term" value="F:GTP binding"/>
    <property type="evidence" value="ECO:0007669"/>
    <property type="project" value="UniProtKB-KW"/>
</dbReference>
<dbReference type="GO" id="GO:0003924">
    <property type="term" value="F:GTPase activity"/>
    <property type="evidence" value="ECO:0007669"/>
    <property type="project" value="UniProtKB-UniRule"/>
</dbReference>
<dbReference type="GO" id="GO:0097216">
    <property type="term" value="F:guanosine tetraphosphate binding"/>
    <property type="evidence" value="ECO:0007669"/>
    <property type="project" value="UniProtKB-ARBA"/>
</dbReference>
<dbReference type="GO" id="GO:0003743">
    <property type="term" value="F:translation initiation factor activity"/>
    <property type="evidence" value="ECO:0007669"/>
    <property type="project" value="UniProtKB-UniRule"/>
</dbReference>
<dbReference type="CDD" id="cd01887">
    <property type="entry name" value="IF2_eIF5B"/>
    <property type="match status" value="1"/>
</dbReference>
<dbReference type="CDD" id="cd03702">
    <property type="entry name" value="IF2_mtIF2_II"/>
    <property type="match status" value="1"/>
</dbReference>
<dbReference type="CDD" id="cd03692">
    <property type="entry name" value="mtIF2_IVc"/>
    <property type="match status" value="1"/>
</dbReference>
<dbReference type="FunFam" id="2.40.30.10:FF:000007">
    <property type="entry name" value="Translation initiation factor IF-2"/>
    <property type="match status" value="1"/>
</dbReference>
<dbReference type="FunFam" id="2.40.30.10:FF:000008">
    <property type="entry name" value="Translation initiation factor IF-2"/>
    <property type="match status" value="1"/>
</dbReference>
<dbReference type="FunFam" id="3.40.50.10050:FF:000001">
    <property type="entry name" value="Translation initiation factor IF-2"/>
    <property type="match status" value="1"/>
</dbReference>
<dbReference type="FunFam" id="3.40.50.300:FF:000019">
    <property type="entry name" value="Translation initiation factor IF-2"/>
    <property type="match status" value="1"/>
</dbReference>
<dbReference type="Gene3D" id="3.40.50.300">
    <property type="entry name" value="P-loop containing nucleotide triphosphate hydrolases"/>
    <property type="match status" value="1"/>
</dbReference>
<dbReference type="Gene3D" id="3.30.56.50">
    <property type="entry name" value="Putative DNA-binding domain, N-terminal subdomain of bacterial translation initiation factor IF2"/>
    <property type="match status" value="1"/>
</dbReference>
<dbReference type="Gene3D" id="2.40.30.10">
    <property type="entry name" value="Translation factors"/>
    <property type="match status" value="2"/>
</dbReference>
<dbReference type="Gene3D" id="3.40.50.10050">
    <property type="entry name" value="Translation initiation factor IF- 2, domain 3"/>
    <property type="match status" value="1"/>
</dbReference>
<dbReference type="HAMAP" id="MF_00100_B">
    <property type="entry name" value="IF_2_B"/>
    <property type="match status" value="1"/>
</dbReference>
<dbReference type="InterPro" id="IPR009061">
    <property type="entry name" value="DNA-bd_dom_put_sf"/>
</dbReference>
<dbReference type="InterPro" id="IPR053905">
    <property type="entry name" value="EF-G-like_DII"/>
</dbReference>
<dbReference type="InterPro" id="IPR004161">
    <property type="entry name" value="EFTu-like_2"/>
</dbReference>
<dbReference type="InterPro" id="IPR013575">
    <property type="entry name" value="IF2_assoc_dom_bac"/>
</dbReference>
<dbReference type="InterPro" id="IPR044145">
    <property type="entry name" value="IF2_II"/>
</dbReference>
<dbReference type="InterPro" id="IPR006847">
    <property type="entry name" value="IF2_N"/>
</dbReference>
<dbReference type="InterPro" id="IPR027417">
    <property type="entry name" value="P-loop_NTPase"/>
</dbReference>
<dbReference type="InterPro" id="IPR005225">
    <property type="entry name" value="Small_GTP-bd"/>
</dbReference>
<dbReference type="InterPro" id="IPR000795">
    <property type="entry name" value="T_Tr_GTP-bd_dom"/>
</dbReference>
<dbReference type="InterPro" id="IPR000178">
    <property type="entry name" value="TF_IF2_bacterial-like"/>
</dbReference>
<dbReference type="InterPro" id="IPR015760">
    <property type="entry name" value="TIF_IF2"/>
</dbReference>
<dbReference type="InterPro" id="IPR023115">
    <property type="entry name" value="TIF_IF2_dom3"/>
</dbReference>
<dbReference type="InterPro" id="IPR036925">
    <property type="entry name" value="TIF_IF2_dom3_sf"/>
</dbReference>
<dbReference type="InterPro" id="IPR009000">
    <property type="entry name" value="Transl_B-barrel_sf"/>
</dbReference>
<dbReference type="NCBIfam" id="TIGR00487">
    <property type="entry name" value="IF-2"/>
    <property type="match status" value="1"/>
</dbReference>
<dbReference type="NCBIfam" id="TIGR00231">
    <property type="entry name" value="small_GTP"/>
    <property type="match status" value="1"/>
</dbReference>
<dbReference type="PANTHER" id="PTHR43381:SF5">
    <property type="entry name" value="TR-TYPE G DOMAIN-CONTAINING PROTEIN"/>
    <property type="match status" value="1"/>
</dbReference>
<dbReference type="PANTHER" id="PTHR43381">
    <property type="entry name" value="TRANSLATION INITIATION FACTOR IF-2-RELATED"/>
    <property type="match status" value="1"/>
</dbReference>
<dbReference type="Pfam" id="PF22042">
    <property type="entry name" value="EF-G_D2"/>
    <property type="match status" value="1"/>
</dbReference>
<dbReference type="Pfam" id="PF00009">
    <property type="entry name" value="GTP_EFTU"/>
    <property type="match status" value="1"/>
</dbReference>
<dbReference type="Pfam" id="PF03144">
    <property type="entry name" value="GTP_EFTU_D2"/>
    <property type="match status" value="1"/>
</dbReference>
<dbReference type="Pfam" id="PF11987">
    <property type="entry name" value="IF-2"/>
    <property type="match status" value="1"/>
</dbReference>
<dbReference type="Pfam" id="PF08364">
    <property type="entry name" value="IF2_assoc"/>
    <property type="match status" value="1"/>
</dbReference>
<dbReference type="Pfam" id="PF04760">
    <property type="entry name" value="IF2_N"/>
    <property type="match status" value="2"/>
</dbReference>
<dbReference type="SUPFAM" id="SSF52156">
    <property type="entry name" value="Initiation factor IF2/eIF5b, domain 3"/>
    <property type="match status" value="1"/>
</dbReference>
<dbReference type="SUPFAM" id="SSF52540">
    <property type="entry name" value="P-loop containing nucleoside triphosphate hydrolases"/>
    <property type="match status" value="1"/>
</dbReference>
<dbReference type="SUPFAM" id="SSF46955">
    <property type="entry name" value="Putative DNA-binding domain"/>
    <property type="match status" value="1"/>
</dbReference>
<dbReference type="SUPFAM" id="SSF50447">
    <property type="entry name" value="Translation proteins"/>
    <property type="match status" value="2"/>
</dbReference>
<dbReference type="PROSITE" id="PS51722">
    <property type="entry name" value="G_TR_2"/>
    <property type="match status" value="1"/>
</dbReference>
<dbReference type="PROSITE" id="PS01176">
    <property type="entry name" value="IF2"/>
    <property type="match status" value="1"/>
</dbReference>
<keyword id="KW-0963">Cytoplasm</keyword>
<keyword id="KW-0342">GTP-binding</keyword>
<keyword id="KW-0396">Initiation factor</keyword>
<keyword id="KW-0547">Nucleotide-binding</keyword>
<keyword id="KW-0648">Protein biosynthesis</keyword>
<keyword id="KW-1185">Reference proteome</keyword>
<reference key="1">
    <citation type="journal article" date="2005" name="Science">
        <title>Life at depth: Photobacterium profundum genome sequence and expression analysis.</title>
        <authorList>
            <person name="Vezzi A."/>
            <person name="Campanaro S."/>
            <person name="D'Angelo M."/>
            <person name="Simonato F."/>
            <person name="Vitulo N."/>
            <person name="Lauro F.M."/>
            <person name="Cestaro A."/>
            <person name="Malacrida G."/>
            <person name="Simionati B."/>
            <person name="Cannata N."/>
            <person name="Romualdi C."/>
            <person name="Bartlett D.H."/>
            <person name="Valle G."/>
        </authorList>
    </citation>
    <scope>NUCLEOTIDE SEQUENCE [LARGE SCALE GENOMIC DNA]</scope>
    <source>
        <strain>ATCC BAA-1253 / SS9</strain>
    </source>
</reference>
<gene>
    <name evidence="2" type="primary">infB</name>
    <name type="ordered locus">PBPRA0612</name>
</gene>
<comment type="function">
    <text evidence="2">One of the essential components for the initiation of protein synthesis. Protects formylmethionyl-tRNA from spontaneous hydrolysis and promotes its binding to the 30S ribosomal subunits. Also involved in the hydrolysis of GTP during the formation of the 70S ribosomal complex.</text>
</comment>
<comment type="subcellular location">
    <subcellularLocation>
        <location evidence="2">Cytoplasm</location>
    </subcellularLocation>
</comment>
<comment type="similarity">
    <text evidence="2">Belongs to the TRAFAC class translation factor GTPase superfamily. Classic translation factor GTPase family. IF-2 subfamily.</text>
</comment>